<evidence type="ECO:0000250" key="1"/>
<evidence type="ECO:0000250" key="2">
    <source>
        <dbReference type="UniProtKB" id="P42685"/>
    </source>
</evidence>
<evidence type="ECO:0000250" key="3">
    <source>
        <dbReference type="UniProtKB" id="Q922K9"/>
    </source>
</evidence>
<evidence type="ECO:0000255" key="4">
    <source>
        <dbReference type="PROSITE-ProRule" id="PRU00159"/>
    </source>
</evidence>
<evidence type="ECO:0000255" key="5">
    <source>
        <dbReference type="PROSITE-ProRule" id="PRU00191"/>
    </source>
</evidence>
<evidence type="ECO:0000255" key="6">
    <source>
        <dbReference type="PROSITE-ProRule" id="PRU00192"/>
    </source>
</evidence>
<evidence type="ECO:0000255" key="7">
    <source>
        <dbReference type="PROSITE-ProRule" id="PRU10028"/>
    </source>
</evidence>
<evidence type="ECO:0000269" key="8">
    <source>
    </source>
</evidence>
<evidence type="ECO:0000269" key="9">
    <source>
    </source>
</evidence>
<sequence length="506" mass="58166">MGSVCMRLWAYLQPFLPCWSQEADKSVVIENPGAYCPPEANRSQGQYFVALFDYEARTAEDLSFHAGDKLQVLDTSHEGWWLARHLEKKGPGLGQQLQGYIPSNYVAEDRSLQAEPWFFGAIKRADAEKQLLYSENQTGAFLIRESESQKGDFSLSVLDEGVVKHYRIRRLDEGGFFLTRRKTFSTLNEFVNYYTTTSDGLCVKLEKPCLKIQVPTPFDLSYKTVDQWEIDRNSIQLLKRLGSGQFGEVWEGLWNNTTPVAVKTLKPGSMDPNDFLREAQIMKSLRHPKLIQLYAVCTLEDPIYIITELMRHGSLQEYLQNDGGSKIRLTQQVDMAAQVASGMAYLESQNYIHRDLAARNVLVGEHNIYKVADFGLARVFKVDNEDIYESKHEIKLPVKWTAPEAIRTNKFSIKSDVWSFGILLYEIITYGKMPYSGMTGAQVIHMLGQNYRLPQPSNCPEQFYSIMMECWNVEPKQRPTFETLHWKLEDYFEPDSSYSDTNNFIN</sequence>
<protein>
    <recommendedName>
        <fullName>Tyrosine-protein kinase FRK</fullName>
        <ecNumber>2.7.10.2</ecNumber>
    </recommendedName>
    <alternativeName>
        <fullName>FYN-related kinase</fullName>
    </alternativeName>
    <alternativeName>
        <fullName>Gastrointestinal-associated kinase</fullName>
        <shortName>GASK</shortName>
    </alternativeName>
    <alternativeName>
        <fullName>Gastrointestinal-associated tyrosine kinase</fullName>
        <shortName>GTK</shortName>
    </alternativeName>
</protein>
<dbReference type="EC" id="2.7.10.2"/>
<dbReference type="EMBL" id="U09583">
    <property type="protein sequence ID" value="AAC52725.1"/>
    <property type="molecule type" value="mRNA"/>
</dbReference>
<dbReference type="PIR" id="S43515">
    <property type="entry name" value="S43515"/>
</dbReference>
<dbReference type="RefSeq" id="NP_077344.1">
    <property type="nucleotide sequence ID" value="NM_024368.2"/>
</dbReference>
<dbReference type="RefSeq" id="XP_006256579.1">
    <property type="nucleotide sequence ID" value="XM_006256517.3"/>
</dbReference>
<dbReference type="SMR" id="Q62662"/>
<dbReference type="FunCoup" id="Q62662">
    <property type="interactions" value="977"/>
</dbReference>
<dbReference type="STRING" id="10116.ENSRNOP00000000653"/>
<dbReference type="iPTMnet" id="Q62662"/>
<dbReference type="PhosphoSitePlus" id="Q62662"/>
<dbReference type="PaxDb" id="10116-ENSRNOP00000000653"/>
<dbReference type="GeneID" id="79209"/>
<dbReference type="KEGG" id="rno:79209"/>
<dbReference type="UCSC" id="RGD:621423">
    <property type="organism name" value="rat"/>
</dbReference>
<dbReference type="AGR" id="RGD:621423"/>
<dbReference type="CTD" id="2444"/>
<dbReference type="RGD" id="621423">
    <property type="gene designation" value="Frk"/>
</dbReference>
<dbReference type="VEuPathDB" id="HostDB:ENSRNOG00000000543"/>
<dbReference type="eggNOG" id="KOG0197">
    <property type="taxonomic scope" value="Eukaryota"/>
</dbReference>
<dbReference type="HOGENOM" id="CLU_000288_7_2_1"/>
<dbReference type="InParanoid" id="Q62662"/>
<dbReference type="OrthoDB" id="14928at9989"/>
<dbReference type="PhylomeDB" id="Q62662"/>
<dbReference type="Reactome" id="R-RNO-6798695">
    <property type="pathway name" value="Neutrophil degranulation"/>
</dbReference>
<dbReference type="Reactome" id="R-RNO-8948751">
    <property type="pathway name" value="Regulation of PTEN stability and activity"/>
</dbReference>
<dbReference type="PRO" id="PR:Q62662"/>
<dbReference type="Proteomes" id="UP000002494">
    <property type="component" value="Chromosome 20"/>
</dbReference>
<dbReference type="Bgee" id="ENSRNOG00000000543">
    <property type="expression patterns" value="Expressed in duodenum and 16 other cell types or tissues"/>
</dbReference>
<dbReference type="GO" id="GO:0005737">
    <property type="term" value="C:cytoplasm"/>
    <property type="evidence" value="ECO:0000266"/>
    <property type="project" value="RGD"/>
</dbReference>
<dbReference type="GO" id="GO:0005829">
    <property type="term" value="C:cytosol"/>
    <property type="evidence" value="ECO:0007669"/>
    <property type="project" value="Ensembl"/>
</dbReference>
<dbReference type="GO" id="GO:0005654">
    <property type="term" value="C:nucleoplasm"/>
    <property type="evidence" value="ECO:0007669"/>
    <property type="project" value="Ensembl"/>
</dbReference>
<dbReference type="GO" id="GO:0005886">
    <property type="term" value="C:plasma membrane"/>
    <property type="evidence" value="ECO:0000318"/>
    <property type="project" value="GO_Central"/>
</dbReference>
<dbReference type="GO" id="GO:0005524">
    <property type="term" value="F:ATP binding"/>
    <property type="evidence" value="ECO:0007669"/>
    <property type="project" value="UniProtKB-KW"/>
</dbReference>
<dbReference type="GO" id="GO:0004715">
    <property type="term" value="F:non-membrane spanning protein tyrosine kinase activity"/>
    <property type="evidence" value="ECO:0000318"/>
    <property type="project" value="GO_Central"/>
</dbReference>
<dbReference type="GO" id="GO:0004713">
    <property type="term" value="F:protein tyrosine kinase activity"/>
    <property type="evidence" value="ECO:0000314"/>
    <property type="project" value="RGD"/>
</dbReference>
<dbReference type="GO" id="GO:0005102">
    <property type="term" value="F:signaling receptor binding"/>
    <property type="evidence" value="ECO:0000318"/>
    <property type="project" value="GO_Central"/>
</dbReference>
<dbReference type="GO" id="GO:0030154">
    <property type="term" value="P:cell differentiation"/>
    <property type="evidence" value="ECO:0000270"/>
    <property type="project" value="RGD"/>
</dbReference>
<dbReference type="GO" id="GO:0007169">
    <property type="term" value="P:cell surface receptor protein tyrosine kinase signaling pathway"/>
    <property type="evidence" value="ECO:0000318"/>
    <property type="project" value="GO_Central"/>
</dbReference>
<dbReference type="GO" id="GO:0000122">
    <property type="term" value="P:negative regulation of transcription by RNA polymerase II"/>
    <property type="evidence" value="ECO:0000266"/>
    <property type="project" value="RGD"/>
</dbReference>
<dbReference type="CDD" id="cd05068">
    <property type="entry name" value="PTKc_Frk_like"/>
    <property type="match status" value="1"/>
</dbReference>
<dbReference type="CDD" id="cd10369">
    <property type="entry name" value="SH2_Src_Frk"/>
    <property type="match status" value="1"/>
</dbReference>
<dbReference type="CDD" id="cd11845">
    <property type="entry name" value="SH3_Src_like"/>
    <property type="match status" value="1"/>
</dbReference>
<dbReference type="FunFam" id="1.10.510.10:FF:000630">
    <property type="entry name" value="Tyrosine-protein kinase"/>
    <property type="match status" value="1"/>
</dbReference>
<dbReference type="FunFam" id="2.30.30.40:FF:000217">
    <property type="entry name" value="Tyrosine-protein kinase"/>
    <property type="match status" value="1"/>
</dbReference>
<dbReference type="FunFam" id="3.30.200.20:FF:000037">
    <property type="entry name" value="Tyrosine-protein kinase"/>
    <property type="match status" value="1"/>
</dbReference>
<dbReference type="FunFam" id="3.30.505.10:FF:000044">
    <property type="entry name" value="Tyrosine-protein kinase"/>
    <property type="match status" value="1"/>
</dbReference>
<dbReference type="Gene3D" id="3.30.200.20">
    <property type="entry name" value="Phosphorylase Kinase, domain 1"/>
    <property type="match status" value="1"/>
</dbReference>
<dbReference type="Gene3D" id="3.30.505.10">
    <property type="entry name" value="SH2 domain"/>
    <property type="match status" value="1"/>
</dbReference>
<dbReference type="Gene3D" id="2.30.30.40">
    <property type="entry name" value="SH3 Domains"/>
    <property type="match status" value="1"/>
</dbReference>
<dbReference type="Gene3D" id="1.10.510.10">
    <property type="entry name" value="Transferase(Phosphotransferase) domain 1"/>
    <property type="match status" value="1"/>
</dbReference>
<dbReference type="InterPro" id="IPR011009">
    <property type="entry name" value="Kinase-like_dom_sf"/>
</dbReference>
<dbReference type="InterPro" id="IPR050198">
    <property type="entry name" value="Non-receptor_tyrosine_kinases"/>
</dbReference>
<dbReference type="InterPro" id="IPR000719">
    <property type="entry name" value="Prot_kinase_dom"/>
</dbReference>
<dbReference type="InterPro" id="IPR017441">
    <property type="entry name" value="Protein_kinase_ATP_BS"/>
</dbReference>
<dbReference type="InterPro" id="IPR001245">
    <property type="entry name" value="Ser-Thr/Tyr_kinase_cat_dom"/>
</dbReference>
<dbReference type="InterPro" id="IPR000980">
    <property type="entry name" value="SH2"/>
</dbReference>
<dbReference type="InterPro" id="IPR036860">
    <property type="entry name" value="SH2_dom_sf"/>
</dbReference>
<dbReference type="InterPro" id="IPR035805">
    <property type="entry name" value="SH2_Frk"/>
</dbReference>
<dbReference type="InterPro" id="IPR036028">
    <property type="entry name" value="SH3-like_dom_sf"/>
</dbReference>
<dbReference type="InterPro" id="IPR001452">
    <property type="entry name" value="SH3_domain"/>
</dbReference>
<dbReference type="InterPro" id="IPR008266">
    <property type="entry name" value="Tyr_kinase_AS"/>
</dbReference>
<dbReference type="InterPro" id="IPR020635">
    <property type="entry name" value="Tyr_kinase_cat_dom"/>
</dbReference>
<dbReference type="PANTHER" id="PTHR24418">
    <property type="entry name" value="TYROSINE-PROTEIN KINASE"/>
    <property type="match status" value="1"/>
</dbReference>
<dbReference type="Pfam" id="PF07714">
    <property type="entry name" value="PK_Tyr_Ser-Thr"/>
    <property type="match status" value="1"/>
</dbReference>
<dbReference type="Pfam" id="PF00017">
    <property type="entry name" value="SH2"/>
    <property type="match status" value="1"/>
</dbReference>
<dbReference type="Pfam" id="PF00018">
    <property type="entry name" value="SH3_1"/>
    <property type="match status" value="1"/>
</dbReference>
<dbReference type="PRINTS" id="PR00401">
    <property type="entry name" value="SH2DOMAIN"/>
</dbReference>
<dbReference type="PRINTS" id="PR00452">
    <property type="entry name" value="SH3DOMAIN"/>
</dbReference>
<dbReference type="PRINTS" id="PR00109">
    <property type="entry name" value="TYRKINASE"/>
</dbReference>
<dbReference type="SMART" id="SM00252">
    <property type="entry name" value="SH2"/>
    <property type="match status" value="1"/>
</dbReference>
<dbReference type="SMART" id="SM00326">
    <property type="entry name" value="SH3"/>
    <property type="match status" value="1"/>
</dbReference>
<dbReference type="SMART" id="SM00219">
    <property type="entry name" value="TyrKc"/>
    <property type="match status" value="1"/>
</dbReference>
<dbReference type="SUPFAM" id="SSF56112">
    <property type="entry name" value="Protein kinase-like (PK-like)"/>
    <property type="match status" value="1"/>
</dbReference>
<dbReference type="SUPFAM" id="SSF55550">
    <property type="entry name" value="SH2 domain"/>
    <property type="match status" value="1"/>
</dbReference>
<dbReference type="SUPFAM" id="SSF50044">
    <property type="entry name" value="SH3-domain"/>
    <property type="match status" value="1"/>
</dbReference>
<dbReference type="PROSITE" id="PS00107">
    <property type="entry name" value="PROTEIN_KINASE_ATP"/>
    <property type="match status" value="1"/>
</dbReference>
<dbReference type="PROSITE" id="PS50011">
    <property type="entry name" value="PROTEIN_KINASE_DOM"/>
    <property type="match status" value="1"/>
</dbReference>
<dbReference type="PROSITE" id="PS00109">
    <property type="entry name" value="PROTEIN_KINASE_TYR"/>
    <property type="match status" value="1"/>
</dbReference>
<dbReference type="PROSITE" id="PS50001">
    <property type="entry name" value="SH2"/>
    <property type="match status" value="1"/>
</dbReference>
<dbReference type="PROSITE" id="PS50002">
    <property type="entry name" value="SH3"/>
    <property type="match status" value="1"/>
</dbReference>
<keyword id="KW-0067">ATP-binding</keyword>
<keyword id="KW-0963">Cytoplasm</keyword>
<keyword id="KW-0418">Kinase</keyword>
<keyword id="KW-0449">Lipoprotein</keyword>
<keyword id="KW-0547">Nucleotide-binding</keyword>
<keyword id="KW-0539">Nucleus</keyword>
<keyword id="KW-0597">Phosphoprotein</keyword>
<keyword id="KW-1185">Reference proteome</keyword>
<keyword id="KW-0727">SH2 domain</keyword>
<keyword id="KW-0728">SH3 domain</keyword>
<keyword id="KW-0808">Transferase</keyword>
<keyword id="KW-0043">Tumor suppressor</keyword>
<keyword id="KW-0829">Tyrosine-protein kinase</keyword>
<proteinExistence type="evidence at protein level"/>
<name>FRK_RAT</name>
<comment type="function">
    <text evidence="1">Non-receptor tyrosine-protein kinase that negatively regulates cell proliferation. Positively regulates PTEN protein stability through phosphorylation of PTEN on 'Tyr-336', which in turn prevents its ubiquitination and degradation, possibly by reducing its binding to NEDD4. May function as a tumor suppressor (By similarity).</text>
</comment>
<comment type="catalytic activity">
    <reaction evidence="7">
        <text>L-tyrosyl-[protein] + ATP = O-phospho-L-tyrosyl-[protein] + ADP + H(+)</text>
        <dbReference type="Rhea" id="RHEA:10596"/>
        <dbReference type="Rhea" id="RHEA-COMP:10136"/>
        <dbReference type="Rhea" id="RHEA-COMP:20101"/>
        <dbReference type="ChEBI" id="CHEBI:15378"/>
        <dbReference type="ChEBI" id="CHEBI:30616"/>
        <dbReference type="ChEBI" id="CHEBI:46858"/>
        <dbReference type="ChEBI" id="CHEBI:61978"/>
        <dbReference type="ChEBI" id="CHEBI:456216"/>
        <dbReference type="EC" id="2.7.10.2"/>
    </reaction>
</comment>
<comment type="subunit">
    <text evidence="1">Interacts (via the SH3-domain) with PTEN. Interacts with RB1 (By similarity).</text>
</comment>
<comment type="subcellular location">
    <subcellularLocation>
        <location evidence="1">Cytoplasm</location>
    </subcellularLocation>
    <subcellularLocation>
        <location evidence="1">Nucleus</location>
    </subcellularLocation>
    <text evidence="1">Predominantly found in the nucleus, with a small fraction found in the cell periphery.</text>
</comment>
<comment type="tissue specificity">
    <text evidence="8 9">Highly expressed in stomach, small intestine and colon. Concentrated in the brush border membranes of epithelial cells, throughout the maturation axis of the adult small intestine.</text>
</comment>
<comment type="similarity">
    <text evidence="4">Belongs to the protein kinase superfamily. Tyr protein kinase family. SRC subfamily.</text>
</comment>
<accession>Q62662</accession>
<feature type="chain" id="PRO_0000260827" description="Tyrosine-protein kinase FRK">
    <location>
        <begin position="1"/>
        <end position="506"/>
    </location>
</feature>
<feature type="domain" description="SH3" evidence="6">
    <location>
        <begin position="43"/>
        <end position="111"/>
    </location>
</feature>
<feature type="domain" description="SH2" evidence="5">
    <location>
        <begin position="117"/>
        <end position="209"/>
    </location>
</feature>
<feature type="domain" description="Protein kinase" evidence="4">
    <location>
        <begin position="235"/>
        <end position="492"/>
    </location>
</feature>
<feature type="active site" description="Proton acceptor" evidence="4 7">
    <location>
        <position position="355"/>
    </location>
</feature>
<feature type="binding site" evidence="4">
    <location>
        <begin position="241"/>
        <end position="249"/>
    </location>
    <ligand>
        <name>ATP</name>
        <dbReference type="ChEBI" id="CHEBI:30616"/>
    </ligand>
</feature>
<feature type="binding site" evidence="4">
    <location>
        <position position="263"/>
    </location>
    <ligand>
        <name>ATP</name>
        <dbReference type="ChEBI" id="CHEBI:30616"/>
    </ligand>
</feature>
<feature type="modified residue" description="Phosphothreonine" evidence="2">
    <location>
        <position position="179"/>
    </location>
</feature>
<feature type="modified residue" description="Phosphotyrosine; by autocatalysis" evidence="3">
    <location>
        <position position="388"/>
    </location>
</feature>
<organism>
    <name type="scientific">Rattus norvegicus</name>
    <name type="common">Rat</name>
    <dbReference type="NCBI Taxonomy" id="10116"/>
    <lineage>
        <taxon>Eukaryota</taxon>
        <taxon>Metazoa</taxon>
        <taxon>Chordata</taxon>
        <taxon>Craniata</taxon>
        <taxon>Vertebrata</taxon>
        <taxon>Euteleostomi</taxon>
        <taxon>Mammalia</taxon>
        <taxon>Eutheria</taxon>
        <taxon>Euarchontoglires</taxon>
        <taxon>Glires</taxon>
        <taxon>Rodentia</taxon>
        <taxon>Myomorpha</taxon>
        <taxon>Muroidea</taxon>
        <taxon>Muridae</taxon>
        <taxon>Murinae</taxon>
        <taxon>Rattus</taxon>
    </lineage>
</organism>
<gene>
    <name type="primary">Frk</name>
    <name type="synonym">Gask</name>
</gene>
<reference key="1">
    <citation type="journal article" date="1996" name="Oncogene">
        <title>The apical membranes of maturing gut columnar epithelial cells contain the enzymatically active form of a newly identified fyn-related tyrosine kinase.</title>
        <authorList>
            <person name="Sunitha I."/>
            <person name="Avigan M.I."/>
        </authorList>
    </citation>
    <scope>NUCLEOTIDE SEQUENCE [MRNA]</scope>
    <scope>TISSUE SPECIFICITY</scope>
    <source>
        <strain>Sprague-Dawley</strain>
        <tissue>Small intestine</tissue>
    </source>
</reference>
<reference key="2">
    <citation type="journal article" date="1994" name="Biochim. Biophys. Acta">
        <title>A newly identified tyrosine kinase is preferentially expressed in the gastrointestinal tract.</title>
        <authorList>
            <person name="Sunitha I."/>
            <person name="Avigan M.I."/>
        </authorList>
    </citation>
    <scope>PARTIAL NUCLEOTIDE SEQUENCE [MRNA]</scope>
    <scope>TISSUE SPECIFICITY</scope>
    <source>
        <strain>Sprague-Dawley</strain>
        <tissue>Small intestine</tissue>
    </source>
</reference>
<reference key="3">
    <citation type="journal article" date="2012" name="Nat. Commun.">
        <title>Quantitative maps of protein phosphorylation sites across 14 different rat organs and tissues.</title>
        <authorList>
            <person name="Lundby A."/>
            <person name="Secher A."/>
            <person name="Lage K."/>
            <person name="Nordsborg N.B."/>
            <person name="Dmytriyev A."/>
            <person name="Lundby C."/>
            <person name="Olsen J.V."/>
        </authorList>
    </citation>
    <scope>IDENTIFICATION BY MASS SPECTROMETRY [LARGE SCALE ANALYSIS]</scope>
</reference>